<comment type="function">
    <text evidence="3">Probably act as a zinc ion transporter moving zinc from the nucleus/endoplasmic reticulum to the cytoplasm. Involved in zinc ion homeostasis and cellular distribution.</text>
</comment>
<comment type="interaction">
    <interactant intactId="EBI-34990">
        <id>Q03455</id>
    </interactant>
    <interactant intactId="EBI-28507">
        <id>P53735</id>
        <label>ZRG17</label>
    </interactant>
    <organismsDiffer>false</organismsDiffer>
    <experiments>4</experiments>
</comment>
<comment type="subcellular location">
    <subcellularLocation>
        <location evidence="4">Endoplasmic reticulum membrane</location>
        <topology evidence="4">Multi-pass membrane protein</topology>
    </subcellularLocation>
    <subcellularLocation>
        <location evidence="4">Nucleus membrane</location>
        <topology evidence="4">Multi-pass membrane protein</topology>
    </subcellularLocation>
</comment>
<comment type="miscellaneous">
    <text>Originally MSC2 was identified in a screen for mutants that show an increase in meiotic unequal sister-chromatid recombination (SCR). MSC2 may also be involved in chromosome instability, rather than SRC.</text>
</comment>
<comment type="miscellaneous">
    <text evidence="5">Present with 1070 molecules/cell in log phase SD medium.</text>
</comment>
<comment type="similarity">
    <text evidence="6">Belongs to the cation diffusion facilitator (CDF) transporter (TC 2.A.4) family. SLC30A subfamily.</text>
</comment>
<comment type="sequence caution" evidence="6">
    <conflict type="erroneous initiation">
        <sequence resource="EMBL-CDS" id="CAA92344"/>
    </conflict>
</comment>
<organism>
    <name type="scientific">Saccharomyces cerevisiae (strain ATCC 204508 / S288c)</name>
    <name type="common">Baker's yeast</name>
    <dbReference type="NCBI Taxonomy" id="559292"/>
    <lineage>
        <taxon>Eukaryota</taxon>
        <taxon>Fungi</taxon>
        <taxon>Dikarya</taxon>
        <taxon>Ascomycota</taxon>
        <taxon>Saccharomycotina</taxon>
        <taxon>Saccharomycetes</taxon>
        <taxon>Saccharomycetales</taxon>
        <taxon>Saccharomycetaceae</taxon>
        <taxon>Saccharomyces</taxon>
    </lineage>
</organism>
<keyword id="KW-0256">Endoplasmic reticulum</keyword>
<keyword id="KW-0406">Ion transport</keyword>
<keyword id="KW-0472">Membrane</keyword>
<keyword id="KW-0539">Nucleus</keyword>
<keyword id="KW-1185">Reference proteome</keyword>
<keyword id="KW-0812">Transmembrane</keyword>
<keyword id="KW-1133">Transmembrane helix</keyword>
<keyword id="KW-0813">Transport</keyword>
<keyword id="KW-0862">Zinc</keyword>
<keyword id="KW-0864">Zinc transport</keyword>
<evidence type="ECO:0000255" key="1"/>
<evidence type="ECO:0000256" key="2">
    <source>
        <dbReference type="SAM" id="MobiDB-lite"/>
    </source>
</evidence>
<evidence type="ECO:0000269" key="3">
    <source>
    </source>
</evidence>
<evidence type="ECO:0000269" key="4">
    <source>
    </source>
</evidence>
<evidence type="ECO:0000269" key="5">
    <source>
    </source>
</evidence>
<evidence type="ECO:0000305" key="6"/>
<sequence length="724" mass="80578">MNLQELLAKVPLLLSYPTIILSSNLIVPSHNDLISRAASTSAAEYADEKLIFFSTDHAIRLIFLPTFVASSFNLFAHYFNFINYSSRRKYYVLFTAIYFLSILTAIFHPIQSTCITLLIIKLLTTADESSPKIALNFKTILKTFVPFITLTLVILRWDPSFDASSGDVNKISTSLAAYALLILTLRYASPLILSTLSSSIGVVSKDTSVAQHSISRNKRFPLILVLPIFSFVLLYLMTIVNKTYNIQLLMVFVFFGCLSIFFLSLKDLFTEDGNQKKGGQEDEYCRMFDIKYMISYLWLTRFTILLTGIMAIVVHFLSFNEITSSIKTDLLSLLFVVVAEYVSSFSNKQPDSHSHNHAHHHSHLTDSLPLENESMFKQMALNKDTRSIFSFLLLNTAFMFVQLLYSFRSKSLGLLSDSLHMALDCTSLLLGLIAGVLTKKPASDKFPFGLNYLGTLAGFTNGVLLLGIVCGIFVEAIERIFNPIHLHATNELLVVATLGLLVNLVGLFAFDHGAHDHGGTDNENMKGIFLHILADTLGSVGVVISTLLIKLTHWPIFDPIASLLIGSLILLSALPLLKSTSANILLRLDDKKHNLVKSALNQISTTPGITGYTTPRFWPTESGSSGHSHAHTHSHAENHSHEHHHDQKNGSQEHPSLVGYIHVQYVDGENSTIIKKRVEKIFENVSIKAWVQVEPQNSTCWCRATSMNTISANPNSLPLQPIAN</sequence>
<name>MSC2_YEAST</name>
<gene>
    <name type="primary">MSC2</name>
    <name type="ordered locus">YDR205W</name>
    <name type="ORF">YD8142.02</name>
</gene>
<proteinExistence type="evidence at protein level"/>
<reference key="1">
    <citation type="journal article" date="1997" name="Nature">
        <title>The nucleotide sequence of Saccharomyces cerevisiae chromosome IV.</title>
        <authorList>
            <person name="Jacq C."/>
            <person name="Alt-Moerbe J."/>
            <person name="Andre B."/>
            <person name="Arnold W."/>
            <person name="Bahr A."/>
            <person name="Ballesta J.P.G."/>
            <person name="Bargues M."/>
            <person name="Baron L."/>
            <person name="Becker A."/>
            <person name="Biteau N."/>
            <person name="Bloecker H."/>
            <person name="Blugeon C."/>
            <person name="Boskovic J."/>
            <person name="Brandt P."/>
            <person name="Brueckner M."/>
            <person name="Buitrago M.J."/>
            <person name="Coster F."/>
            <person name="Delaveau T."/>
            <person name="del Rey F."/>
            <person name="Dujon B."/>
            <person name="Eide L.G."/>
            <person name="Garcia-Cantalejo J.M."/>
            <person name="Goffeau A."/>
            <person name="Gomez-Peris A."/>
            <person name="Granotier C."/>
            <person name="Hanemann V."/>
            <person name="Hankeln T."/>
            <person name="Hoheisel J.D."/>
            <person name="Jaeger W."/>
            <person name="Jimenez A."/>
            <person name="Jonniaux J.-L."/>
            <person name="Kraemer C."/>
            <person name="Kuester H."/>
            <person name="Laamanen P."/>
            <person name="Legros Y."/>
            <person name="Louis E.J."/>
            <person name="Moeller-Rieker S."/>
            <person name="Monnet A."/>
            <person name="Moro M."/>
            <person name="Mueller-Auer S."/>
            <person name="Nussbaumer B."/>
            <person name="Paricio N."/>
            <person name="Paulin L."/>
            <person name="Perea J."/>
            <person name="Perez-Alonso M."/>
            <person name="Perez-Ortin J.E."/>
            <person name="Pohl T.M."/>
            <person name="Prydz H."/>
            <person name="Purnelle B."/>
            <person name="Rasmussen S.W."/>
            <person name="Remacha M.A."/>
            <person name="Revuelta J.L."/>
            <person name="Rieger M."/>
            <person name="Salom D."/>
            <person name="Saluz H.P."/>
            <person name="Saiz J.E."/>
            <person name="Saren A.-M."/>
            <person name="Schaefer M."/>
            <person name="Scharfe M."/>
            <person name="Schmidt E.R."/>
            <person name="Schneider C."/>
            <person name="Scholler P."/>
            <person name="Schwarz S."/>
            <person name="Soler-Mira A."/>
            <person name="Urrestarazu L.A."/>
            <person name="Verhasselt P."/>
            <person name="Vissers S."/>
            <person name="Voet M."/>
            <person name="Volckaert G."/>
            <person name="Wagner G."/>
            <person name="Wambutt R."/>
            <person name="Wedler E."/>
            <person name="Wedler H."/>
            <person name="Woelfl S."/>
            <person name="Harris D.E."/>
            <person name="Bowman S."/>
            <person name="Brown D."/>
            <person name="Churcher C.M."/>
            <person name="Connor R."/>
            <person name="Dedman K."/>
            <person name="Gentles S."/>
            <person name="Hamlin N."/>
            <person name="Hunt S."/>
            <person name="Jones L."/>
            <person name="McDonald S."/>
            <person name="Murphy L.D."/>
            <person name="Niblett D."/>
            <person name="Odell C."/>
            <person name="Oliver K."/>
            <person name="Rajandream M.A."/>
            <person name="Richards C."/>
            <person name="Shore L."/>
            <person name="Walsh S.V."/>
            <person name="Barrell B.G."/>
            <person name="Dietrich F.S."/>
            <person name="Mulligan J.T."/>
            <person name="Allen E."/>
            <person name="Araujo R."/>
            <person name="Aviles E."/>
            <person name="Berno A."/>
            <person name="Carpenter J."/>
            <person name="Chen E."/>
            <person name="Cherry J.M."/>
            <person name="Chung E."/>
            <person name="Duncan M."/>
            <person name="Hunicke-Smith S."/>
            <person name="Hyman R.W."/>
            <person name="Komp C."/>
            <person name="Lashkari D."/>
            <person name="Lew H."/>
            <person name="Lin D."/>
            <person name="Mosedale D."/>
            <person name="Nakahara K."/>
            <person name="Namath A."/>
            <person name="Oefner P."/>
            <person name="Oh C."/>
            <person name="Petel F.X."/>
            <person name="Roberts D."/>
            <person name="Schramm S."/>
            <person name="Schroeder M."/>
            <person name="Shogren T."/>
            <person name="Shroff N."/>
            <person name="Winant A."/>
            <person name="Yelton M.A."/>
            <person name="Botstein D."/>
            <person name="Davis R.W."/>
            <person name="Johnston M."/>
            <person name="Andrews S."/>
            <person name="Brinkman R."/>
            <person name="Cooper J."/>
            <person name="Ding H."/>
            <person name="Du Z."/>
            <person name="Favello A."/>
            <person name="Fulton L."/>
            <person name="Gattung S."/>
            <person name="Greco T."/>
            <person name="Hallsworth K."/>
            <person name="Hawkins J."/>
            <person name="Hillier L.W."/>
            <person name="Jier M."/>
            <person name="Johnson D."/>
            <person name="Johnston L."/>
            <person name="Kirsten J."/>
            <person name="Kucaba T."/>
            <person name="Langston Y."/>
            <person name="Latreille P."/>
            <person name="Le T."/>
            <person name="Mardis E."/>
            <person name="Menezes S."/>
            <person name="Miller N."/>
            <person name="Nhan M."/>
            <person name="Pauley A."/>
            <person name="Peluso D."/>
            <person name="Rifkin L."/>
            <person name="Riles L."/>
            <person name="Taich A."/>
            <person name="Trevaskis E."/>
            <person name="Vignati D."/>
            <person name="Wilcox L."/>
            <person name="Wohldman P."/>
            <person name="Vaudin M."/>
            <person name="Wilson R."/>
            <person name="Waterston R."/>
            <person name="Albermann K."/>
            <person name="Hani J."/>
            <person name="Heumann K."/>
            <person name="Kleine K."/>
            <person name="Mewes H.-W."/>
            <person name="Zollner A."/>
            <person name="Zaccaria P."/>
        </authorList>
    </citation>
    <scope>NUCLEOTIDE SEQUENCE [LARGE SCALE GENOMIC DNA]</scope>
    <source>
        <strain>ATCC 204508 / S288c</strain>
    </source>
</reference>
<reference key="2">
    <citation type="journal article" date="2014" name="G3 (Bethesda)">
        <title>The reference genome sequence of Saccharomyces cerevisiae: Then and now.</title>
        <authorList>
            <person name="Engel S.R."/>
            <person name="Dietrich F.S."/>
            <person name="Fisk D.G."/>
            <person name="Binkley G."/>
            <person name="Balakrishnan R."/>
            <person name="Costanzo M.C."/>
            <person name="Dwight S.S."/>
            <person name="Hitz B.C."/>
            <person name="Karra K."/>
            <person name="Nash R.S."/>
            <person name="Weng S."/>
            <person name="Wong E.D."/>
            <person name="Lloyd P."/>
            <person name="Skrzypek M.S."/>
            <person name="Miyasato S.R."/>
            <person name="Simison M."/>
            <person name="Cherry J.M."/>
        </authorList>
    </citation>
    <scope>GENOME REANNOTATION</scope>
    <source>
        <strain>ATCC 204508 / S288c</strain>
    </source>
</reference>
<reference key="3">
    <citation type="journal article" date="1999" name="Genetics">
        <title>Genetic control of recombination partner preference in yeast meiosis. Isolation and characterization of mutants elevated for meiotic unequal sister-chromatid recombination.</title>
        <authorList>
            <person name="Thompson D.A."/>
            <person name="Stahl F.W."/>
        </authorList>
    </citation>
    <scope>MUTANT ANALYSIS</scope>
</reference>
<reference key="4">
    <citation type="journal article" date="2003" name="Genetics">
        <authorList>
            <person name="Thompson D.A."/>
            <person name="Stahl F.W."/>
        </authorList>
    </citation>
    <scope>ERRATUM OF PUBMED:10511544</scope>
</reference>
<reference key="5">
    <citation type="journal article" date="2001" name="J. Biol. Chem.">
        <title>The yeast gene MSC2, a member of the cation diffusion facilitator family, affects the cellular distribution of zinc.</title>
        <authorList>
            <person name="Li L."/>
            <person name="Kaplan J."/>
        </authorList>
    </citation>
    <scope>FUNCTION</scope>
</reference>
<reference key="6">
    <citation type="journal article" date="2003" name="Nature">
        <title>Sequencing and comparison of yeast species to identify genes and regulatory elements.</title>
        <authorList>
            <person name="Kellis M."/>
            <person name="Patterson N."/>
            <person name="Endrizzi M."/>
            <person name="Birren B.W."/>
            <person name="Lander E.S."/>
        </authorList>
    </citation>
    <scope>IDENTIFICATION OF PROBABLE INITIATION SITE</scope>
</reference>
<reference key="7">
    <citation type="journal article" date="2003" name="Nature">
        <title>Global analysis of protein localization in budding yeast.</title>
        <authorList>
            <person name="Huh W.-K."/>
            <person name="Falvo J.V."/>
            <person name="Gerke L.C."/>
            <person name="Carroll A.S."/>
            <person name="Howson R.W."/>
            <person name="Weissman J.S."/>
            <person name="O'Shea E.K."/>
        </authorList>
    </citation>
    <scope>SUBCELLULAR LOCATION [LARGE SCALE ANALYSIS]</scope>
</reference>
<reference key="8">
    <citation type="journal article" date="2003" name="Nature">
        <title>Global analysis of protein expression in yeast.</title>
        <authorList>
            <person name="Ghaemmaghami S."/>
            <person name="Huh W.-K."/>
            <person name="Bower K."/>
            <person name="Howson R.W."/>
            <person name="Belle A."/>
            <person name="Dephoure N."/>
            <person name="O'Shea E.K."/>
            <person name="Weissman J.S."/>
        </authorList>
    </citation>
    <scope>LEVEL OF PROTEIN EXPRESSION [LARGE SCALE ANALYSIS]</scope>
</reference>
<reference key="9">
    <citation type="journal article" date="2006" name="Proc. Natl. Acad. Sci. U.S.A.">
        <title>A global topology map of the Saccharomyces cerevisiae membrane proteome.</title>
        <authorList>
            <person name="Kim H."/>
            <person name="Melen K."/>
            <person name="Oesterberg M."/>
            <person name="von Heijne G."/>
        </authorList>
    </citation>
    <scope>TOPOLOGY [LARGE SCALE ANALYSIS]</scope>
    <source>
        <strain>ATCC 208353 / W303-1A</strain>
    </source>
</reference>
<dbReference type="EMBL" id="Z68194">
    <property type="protein sequence ID" value="CAA92344.1"/>
    <property type="status" value="ALT_INIT"/>
    <property type="molecule type" value="Genomic_DNA"/>
</dbReference>
<dbReference type="EMBL" id="BK006938">
    <property type="protein sequence ID" value="DAA12046.1"/>
    <property type="molecule type" value="Genomic_DNA"/>
</dbReference>
<dbReference type="PIR" id="S61568">
    <property type="entry name" value="S61568"/>
</dbReference>
<dbReference type="RefSeq" id="NP_010491.4">
    <property type="nucleotide sequence ID" value="NM_001180513.3"/>
</dbReference>
<dbReference type="SMR" id="Q03455"/>
<dbReference type="BioGRID" id="32255">
    <property type="interactions" value="93"/>
</dbReference>
<dbReference type="DIP" id="DIP-5209N"/>
<dbReference type="FunCoup" id="Q03455">
    <property type="interactions" value="47"/>
</dbReference>
<dbReference type="IntAct" id="Q03455">
    <property type="interactions" value="2"/>
</dbReference>
<dbReference type="MINT" id="Q03455"/>
<dbReference type="STRING" id="4932.YDR205W"/>
<dbReference type="TCDB" id="2.A.4.4.1">
    <property type="family name" value="the cation diffusion facilitator (cdf) family"/>
</dbReference>
<dbReference type="iPTMnet" id="Q03455"/>
<dbReference type="PaxDb" id="4932-YDR205W"/>
<dbReference type="PeptideAtlas" id="Q03455"/>
<dbReference type="EnsemblFungi" id="YDR205W_mRNA">
    <property type="protein sequence ID" value="YDR205W"/>
    <property type="gene ID" value="YDR205W"/>
</dbReference>
<dbReference type="GeneID" id="851786"/>
<dbReference type="KEGG" id="sce:YDR205W"/>
<dbReference type="AGR" id="SGD:S000002613"/>
<dbReference type="SGD" id="S000002613">
    <property type="gene designation" value="MSC2"/>
</dbReference>
<dbReference type="VEuPathDB" id="FungiDB:YDR205W"/>
<dbReference type="eggNOG" id="KOG1484">
    <property type="taxonomic scope" value="Eukaryota"/>
</dbReference>
<dbReference type="GeneTree" id="ENSGT00940000159571"/>
<dbReference type="HOGENOM" id="CLU_013430_11_1_1"/>
<dbReference type="InParanoid" id="Q03455"/>
<dbReference type="OMA" id="RIFNPIH"/>
<dbReference type="OrthoDB" id="78669at2759"/>
<dbReference type="BioCyc" id="YEAST:G3O-29789-MONOMER"/>
<dbReference type="Reactome" id="R-SCE-264876">
    <property type="pathway name" value="Insulin processing"/>
</dbReference>
<dbReference type="Reactome" id="R-SCE-435368">
    <property type="pathway name" value="Zinc efflux and compartmentalization by the SLC30 family"/>
</dbReference>
<dbReference type="BioGRID-ORCS" id="851786">
    <property type="hits" value="0 hits in 10 CRISPR screens"/>
</dbReference>
<dbReference type="PRO" id="PR:Q03455"/>
<dbReference type="Proteomes" id="UP000002311">
    <property type="component" value="Chromosome IV"/>
</dbReference>
<dbReference type="RNAct" id="Q03455">
    <property type="molecule type" value="protein"/>
</dbReference>
<dbReference type="GO" id="GO:0031410">
    <property type="term" value="C:cytoplasmic vesicle"/>
    <property type="evidence" value="ECO:0000318"/>
    <property type="project" value="GO_Central"/>
</dbReference>
<dbReference type="GO" id="GO:0005783">
    <property type="term" value="C:endoplasmic reticulum"/>
    <property type="evidence" value="ECO:0000314"/>
    <property type="project" value="SGD"/>
</dbReference>
<dbReference type="GO" id="GO:0005789">
    <property type="term" value="C:endoplasmic reticulum membrane"/>
    <property type="evidence" value="ECO:0007669"/>
    <property type="project" value="UniProtKB-SubCell"/>
</dbReference>
<dbReference type="GO" id="GO:0005794">
    <property type="term" value="C:Golgi apparatus"/>
    <property type="evidence" value="ECO:0000318"/>
    <property type="project" value="GO_Central"/>
</dbReference>
<dbReference type="GO" id="GO:0031965">
    <property type="term" value="C:nuclear membrane"/>
    <property type="evidence" value="ECO:0007669"/>
    <property type="project" value="UniProtKB-SubCell"/>
</dbReference>
<dbReference type="GO" id="GO:0005385">
    <property type="term" value="F:zinc ion transmembrane transporter activity"/>
    <property type="evidence" value="ECO:0000315"/>
    <property type="project" value="SGD"/>
</dbReference>
<dbReference type="GO" id="GO:0006882">
    <property type="term" value="P:intracellular zinc ion homeostasis"/>
    <property type="evidence" value="ECO:0000315"/>
    <property type="project" value="SGD"/>
</dbReference>
<dbReference type="GO" id="GO:0055085">
    <property type="term" value="P:transmembrane transport"/>
    <property type="evidence" value="ECO:0000315"/>
    <property type="project" value="SGD"/>
</dbReference>
<dbReference type="GO" id="GO:1904257">
    <property type="term" value="P:zinc ion import into Golgi lumen"/>
    <property type="evidence" value="ECO:0000318"/>
    <property type="project" value="GO_Central"/>
</dbReference>
<dbReference type="GO" id="GO:0006829">
    <property type="term" value="P:zinc ion transport"/>
    <property type="evidence" value="ECO:0000315"/>
    <property type="project" value="SGD"/>
</dbReference>
<dbReference type="FunFam" id="1.20.1510.10:FF:000014">
    <property type="entry name" value="Cation efflux protein/ zinc transporter"/>
    <property type="match status" value="1"/>
</dbReference>
<dbReference type="Gene3D" id="1.20.1510.10">
    <property type="entry name" value="Cation efflux protein transmembrane domain"/>
    <property type="match status" value="1"/>
</dbReference>
<dbReference type="InterPro" id="IPR002524">
    <property type="entry name" value="Cation_efflux"/>
</dbReference>
<dbReference type="InterPro" id="IPR027469">
    <property type="entry name" value="Cation_efflux_TMD_sf"/>
</dbReference>
<dbReference type="InterPro" id="IPR045316">
    <property type="entry name" value="Msc2-like"/>
</dbReference>
<dbReference type="NCBIfam" id="TIGR01297">
    <property type="entry name" value="CDF"/>
    <property type="match status" value="1"/>
</dbReference>
<dbReference type="PANTHER" id="PTHR45755">
    <property type="match status" value="1"/>
</dbReference>
<dbReference type="PANTHER" id="PTHR45755:SF4">
    <property type="entry name" value="ZINC TRANSPORTER 7"/>
    <property type="match status" value="1"/>
</dbReference>
<dbReference type="Pfam" id="PF01545">
    <property type="entry name" value="Cation_efflux"/>
    <property type="match status" value="1"/>
</dbReference>
<dbReference type="SUPFAM" id="SSF161111">
    <property type="entry name" value="Cation efflux protein transmembrane domain-like"/>
    <property type="match status" value="1"/>
</dbReference>
<protein>
    <recommendedName>
        <fullName>Probable zinc transporter MSC2</fullName>
    </recommendedName>
    <alternativeName>
        <fullName>Meiotic sister chromatid recombination protein 2</fullName>
    </alternativeName>
</protein>
<feature type="chain" id="PRO_0000206115" description="Probable zinc transporter MSC2">
    <location>
        <begin position="1"/>
        <end position="724"/>
    </location>
</feature>
<feature type="topological domain" description="Cytoplasmic" evidence="1">
    <location>
        <begin position="1"/>
        <end position="6"/>
    </location>
</feature>
<feature type="transmembrane region" description="Helical" evidence="1">
    <location>
        <begin position="7"/>
        <end position="27"/>
    </location>
</feature>
<feature type="topological domain" description="Lumenal" evidence="1">
    <location>
        <begin position="28"/>
        <end position="58"/>
    </location>
</feature>
<feature type="transmembrane region" description="Helical" evidence="1">
    <location>
        <begin position="59"/>
        <end position="79"/>
    </location>
</feature>
<feature type="topological domain" description="Cytoplasmic" evidence="1">
    <location>
        <begin position="80"/>
        <end position="90"/>
    </location>
</feature>
<feature type="transmembrane region" description="Helical" evidence="1">
    <location>
        <begin position="91"/>
        <end position="111"/>
    </location>
</feature>
<feature type="topological domain" description="Lumenal" evidence="1">
    <location>
        <begin position="112"/>
        <end position="134"/>
    </location>
</feature>
<feature type="transmembrane region" description="Helical" evidence="1">
    <location>
        <begin position="135"/>
        <end position="155"/>
    </location>
</feature>
<feature type="topological domain" description="Cytoplasmic" evidence="1">
    <location>
        <begin position="156"/>
        <end position="174"/>
    </location>
</feature>
<feature type="transmembrane region" description="Helical" evidence="1">
    <location>
        <begin position="175"/>
        <end position="195"/>
    </location>
</feature>
<feature type="topological domain" description="Lumenal" evidence="1">
    <location>
        <begin position="196"/>
        <end position="219"/>
    </location>
</feature>
<feature type="transmembrane region" description="Helical" evidence="1">
    <location>
        <begin position="220"/>
        <end position="240"/>
    </location>
</feature>
<feature type="topological domain" description="Cytoplasmic" evidence="1">
    <location>
        <begin position="241"/>
        <end position="244"/>
    </location>
</feature>
<feature type="transmembrane region" description="Helical" evidence="1">
    <location>
        <begin position="245"/>
        <end position="265"/>
    </location>
</feature>
<feature type="topological domain" description="Lumenal" evidence="1">
    <location>
        <begin position="266"/>
        <end position="298"/>
    </location>
</feature>
<feature type="transmembrane region" description="Helical" evidence="1">
    <location>
        <begin position="299"/>
        <end position="319"/>
    </location>
</feature>
<feature type="topological domain" description="Cytoplasmic" evidence="1">
    <location>
        <begin position="320"/>
        <end position="386"/>
    </location>
</feature>
<feature type="transmembrane region" description="Helical" evidence="1">
    <location>
        <begin position="387"/>
        <end position="407"/>
    </location>
</feature>
<feature type="topological domain" description="Lumenal" evidence="1">
    <location>
        <begin position="408"/>
        <end position="417"/>
    </location>
</feature>
<feature type="transmembrane region" description="Helical" evidence="1">
    <location>
        <begin position="418"/>
        <end position="438"/>
    </location>
</feature>
<feature type="topological domain" description="Cytoplasmic" evidence="1">
    <location>
        <begin position="439"/>
        <end position="453"/>
    </location>
</feature>
<feature type="transmembrane region" description="Helical" evidence="1">
    <location>
        <begin position="454"/>
        <end position="474"/>
    </location>
</feature>
<feature type="topological domain" description="Lumenal" evidence="1">
    <location>
        <begin position="475"/>
        <end position="491"/>
    </location>
</feature>
<feature type="transmembrane region" description="Helical" evidence="1">
    <location>
        <begin position="492"/>
        <end position="512"/>
    </location>
</feature>
<feature type="topological domain" description="Cytoplasmic" evidence="1">
    <location>
        <begin position="513"/>
        <end position="528"/>
    </location>
</feature>
<feature type="transmembrane region" description="Helical" evidence="1">
    <location>
        <begin position="529"/>
        <end position="549"/>
    </location>
</feature>
<feature type="topological domain" description="Lumenal" evidence="1">
    <location>
        <begin position="550"/>
        <end position="563"/>
    </location>
</feature>
<feature type="transmembrane region" description="Helical" evidence="1">
    <location>
        <begin position="564"/>
        <end position="584"/>
    </location>
</feature>
<feature type="topological domain" description="Cytoplasmic" evidence="1">
    <location>
        <begin position="585"/>
        <end position="724"/>
    </location>
</feature>
<feature type="region of interest" description="Disordered" evidence="2">
    <location>
        <begin position="614"/>
        <end position="653"/>
    </location>
</feature>
<feature type="compositionally biased region" description="Basic and acidic residues" evidence="2">
    <location>
        <begin position="634"/>
        <end position="648"/>
    </location>
</feature>
<accession>Q03455</accession>
<accession>D6VSI6</accession>